<protein>
    <recommendedName>
        <fullName evidence="1">Acetyl-coenzyme A carboxylase carboxyl transferase subunit alpha</fullName>
        <shortName evidence="1">ACCase subunit alpha</shortName>
        <shortName evidence="1">Acetyl-CoA carboxylase carboxyltransferase subunit alpha</shortName>
        <ecNumber evidence="1">2.1.3.15</ecNumber>
    </recommendedName>
</protein>
<reference key="1">
    <citation type="journal article" date="2009" name="J. Bacteriol.">
        <title>Genome sequence of Azotobacter vinelandii, an obligate aerobe specialized to support diverse anaerobic metabolic processes.</title>
        <authorList>
            <person name="Setubal J.C."/>
            <person name="Dos Santos P."/>
            <person name="Goldman B.S."/>
            <person name="Ertesvaag H."/>
            <person name="Espin G."/>
            <person name="Rubio L.M."/>
            <person name="Valla S."/>
            <person name="Almeida N.F."/>
            <person name="Balasubramanian D."/>
            <person name="Cromes L."/>
            <person name="Curatti L."/>
            <person name="Du Z."/>
            <person name="Godsy E."/>
            <person name="Goodner B."/>
            <person name="Hellner-Burris K."/>
            <person name="Hernandez J.A."/>
            <person name="Houmiel K."/>
            <person name="Imperial J."/>
            <person name="Kennedy C."/>
            <person name="Larson T.J."/>
            <person name="Latreille P."/>
            <person name="Ligon L.S."/>
            <person name="Lu J."/>
            <person name="Maerk M."/>
            <person name="Miller N.M."/>
            <person name="Norton S."/>
            <person name="O'Carroll I.P."/>
            <person name="Paulsen I."/>
            <person name="Raulfs E.C."/>
            <person name="Roemer R."/>
            <person name="Rosser J."/>
            <person name="Segura D."/>
            <person name="Slater S."/>
            <person name="Stricklin S.L."/>
            <person name="Studholme D.J."/>
            <person name="Sun J."/>
            <person name="Viana C.J."/>
            <person name="Wallin E."/>
            <person name="Wang B."/>
            <person name="Wheeler C."/>
            <person name="Zhu H."/>
            <person name="Dean D.R."/>
            <person name="Dixon R."/>
            <person name="Wood D."/>
        </authorList>
    </citation>
    <scope>NUCLEOTIDE SEQUENCE [LARGE SCALE GENOMIC DNA]</scope>
    <source>
        <strain>DJ / ATCC BAA-1303</strain>
    </source>
</reference>
<dbReference type="EC" id="2.1.3.15" evidence="1"/>
<dbReference type="EMBL" id="CP001157">
    <property type="protein sequence ID" value="ACO80023.1"/>
    <property type="molecule type" value="Genomic_DNA"/>
</dbReference>
<dbReference type="RefSeq" id="WP_012702398.1">
    <property type="nucleotide sequence ID" value="NC_012560.1"/>
</dbReference>
<dbReference type="SMR" id="C1DST0"/>
<dbReference type="STRING" id="322710.Avin_38830"/>
<dbReference type="EnsemblBacteria" id="ACO80023">
    <property type="protein sequence ID" value="ACO80023"/>
    <property type="gene ID" value="Avin_38830"/>
</dbReference>
<dbReference type="GeneID" id="88186841"/>
<dbReference type="KEGG" id="avn:Avin_38830"/>
<dbReference type="eggNOG" id="COG0825">
    <property type="taxonomic scope" value="Bacteria"/>
</dbReference>
<dbReference type="HOGENOM" id="CLU_015486_0_2_6"/>
<dbReference type="OrthoDB" id="9808023at2"/>
<dbReference type="UniPathway" id="UPA00655">
    <property type="reaction ID" value="UER00711"/>
</dbReference>
<dbReference type="Proteomes" id="UP000002424">
    <property type="component" value="Chromosome"/>
</dbReference>
<dbReference type="GO" id="GO:0009317">
    <property type="term" value="C:acetyl-CoA carboxylase complex"/>
    <property type="evidence" value="ECO:0007669"/>
    <property type="project" value="InterPro"/>
</dbReference>
<dbReference type="GO" id="GO:0003989">
    <property type="term" value="F:acetyl-CoA carboxylase activity"/>
    <property type="evidence" value="ECO:0007669"/>
    <property type="project" value="InterPro"/>
</dbReference>
<dbReference type="GO" id="GO:0005524">
    <property type="term" value="F:ATP binding"/>
    <property type="evidence" value="ECO:0007669"/>
    <property type="project" value="UniProtKB-KW"/>
</dbReference>
<dbReference type="GO" id="GO:0016743">
    <property type="term" value="F:carboxyl- or carbamoyltransferase activity"/>
    <property type="evidence" value="ECO:0007669"/>
    <property type="project" value="UniProtKB-UniRule"/>
</dbReference>
<dbReference type="GO" id="GO:0006633">
    <property type="term" value="P:fatty acid biosynthetic process"/>
    <property type="evidence" value="ECO:0007669"/>
    <property type="project" value="UniProtKB-KW"/>
</dbReference>
<dbReference type="GO" id="GO:2001295">
    <property type="term" value="P:malonyl-CoA biosynthetic process"/>
    <property type="evidence" value="ECO:0007669"/>
    <property type="project" value="UniProtKB-UniRule"/>
</dbReference>
<dbReference type="FunFam" id="3.90.226.10:FF:000008">
    <property type="entry name" value="Acetyl-coenzyme A carboxylase carboxyl transferase subunit alpha"/>
    <property type="match status" value="1"/>
</dbReference>
<dbReference type="Gene3D" id="3.90.226.10">
    <property type="entry name" value="2-enoyl-CoA Hydratase, Chain A, domain 1"/>
    <property type="match status" value="1"/>
</dbReference>
<dbReference type="HAMAP" id="MF_00823">
    <property type="entry name" value="AcetylCoA_CT_alpha"/>
    <property type="match status" value="1"/>
</dbReference>
<dbReference type="InterPro" id="IPR001095">
    <property type="entry name" value="Acetyl_CoA_COase_a_su"/>
</dbReference>
<dbReference type="InterPro" id="IPR029045">
    <property type="entry name" value="ClpP/crotonase-like_dom_sf"/>
</dbReference>
<dbReference type="InterPro" id="IPR011763">
    <property type="entry name" value="COA_CT_C"/>
</dbReference>
<dbReference type="NCBIfam" id="TIGR00513">
    <property type="entry name" value="accA"/>
    <property type="match status" value="1"/>
</dbReference>
<dbReference type="NCBIfam" id="NF041504">
    <property type="entry name" value="AccA_sub"/>
    <property type="match status" value="1"/>
</dbReference>
<dbReference type="NCBIfam" id="NF004344">
    <property type="entry name" value="PRK05724.1"/>
    <property type="match status" value="1"/>
</dbReference>
<dbReference type="PANTHER" id="PTHR42853">
    <property type="entry name" value="ACETYL-COENZYME A CARBOXYLASE CARBOXYL TRANSFERASE SUBUNIT ALPHA"/>
    <property type="match status" value="1"/>
</dbReference>
<dbReference type="PANTHER" id="PTHR42853:SF3">
    <property type="entry name" value="ACETYL-COENZYME A CARBOXYLASE CARBOXYL TRANSFERASE SUBUNIT ALPHA, CHLOROPLASTIC"/>
    <property type="match status" value="1"/>
</dbReference>
<dbReference type="Pfam" id="PF03255">
    <property type="entry name" value="ACCA"/>
    <property type="match status" value="1"/>
</dbReference>
<dbReference type="PRINTS" id="PR01069">
    <property type="entry name" value="ACCCTRFRASEA"/>
</dbReference>
<dbReference type="SUPFAM" id="SSF52096">
    <property type="entry name" value="ClpP/crotonase"/>
    <property type="match status" value="1"/>
</dbReference>
<dbReference type="PROSITE" id="PS50989">
    <property type="entry name" value="COA_CT_CTER"/>
    <property type="match status" value="1"/>
</dbReference>
<feature type="chain" id="PRO_1000213122" description="Acetyl-coenzyme A carboxylase carboxyl transferase subunit alpha">
    <location>
        <begin position="1"/>
        <end position="316"/>
    </location>
</feature>
<feature type="domain" description="CoA carboxyltransferase C-terminal" evidence="2">
    <location>
        <begin position="39"/>
        <end position="293"/>
    </location>
</feature>
<name>ACCA_AZOVD</name>
<evidence type="ECO:0000255" key="1">
    <source>
        <dbReference type="HAMAP-Rule" id="MF_00823"/>
    </source>
</evidence>
<evidence type="ECO:0000255" key="2">
    <source>
        <dbReference type="PROSITE-ProRule" id="PRU01137"/>
    </source>
</evidence>
<accession>C1DST0</accession>
<organism>
    <name type="scientific">Azotobacter vinelandii (strain DJ / ATCC BAA-1303)</name>
    <dbReference type="NCBI Taxonomy" id="322710"/>
    <lineage>
        <taxon>Bacteria</taxon>
        <taxon>Pseudomonadati</taxon>
        <taxon>Pseudomonadota</taxon>
        <taxon>Gammaproteobacteria</taxon>
        <taxon>Pseudomonadales</taxon>
        <taxon>Pseudomonadaceae</taxon>
        <taxon>Azotobacter</taxon>
    </lineage>
</organism>
<sequence length="316" mass="35057">MNPNFLDFEQPIADLQAKIEELRLVGDDNALNISDEISRLQDKSHALTASIFGNLTSWQIAQLARHPRRPYTLDYLEHIFTEFEELHGDRHFTDDAAIVGGVARLDDQPVMVIGHQKGRDVREKVRRNFGMPRPEGYRKACRLMEMAERFKLPILTFIDTPGAYPGIDAEERNQSEAIAWNLRVMARLKTPIVSTVIGEGGSGGALAIGVCDRLNMLQYSTYAVISPEGCASILWRTAEKAADAAEAMGITAARLRELGIVDEVIGEPLGGAHRNPAATAESVRQTLLAQLESLRGLDADSLLEQRYERLMSYGRA</sequence>
<keyword id="KW-0067">ATP-binding</keyword>
<keyword id="KW-0963">Cytoplasm</keyword>
<keyword id="KW-0275">Fatty acid biosynthesis</keyword>
<keyword id="KW-0276">Fatty acid metabolism</keyword>
<keyword id="KW-0444">Lipid biosynthesis</keyword>
<keyword id="KW-0443">Lipid metabolism</keyword>
<keyword id="KW-0547">Nucleotide-binding</keyword>
<keyword id="KW-0808">Transferase</keyword>
<proteinExistence type="inferred from homology"/>
<gene>
    <name evidence="1" type="primary">accA</name>
    <name type="ordered locus">Avin_38830</name>
</gene>
<comment type="function">
    <text evidence="1">Component of the acetyl coenzyme A carboxylase (ACC) complex. First, biotin carboxylase catalyzes the carboxylation of biotin on its carrier protein (BCCP) and then the CO(2) group is transferred by the carboxyltransferase to acetyl-CoA to form malonyl-CoA.</text>
</comment>
<comment type="catalytic activity">
    <reaction evidence="1">
        <text>N(6)-carboxybiotinyl-L-lysyl-[protein] + acetyl-CoA = N(6)-biotinyl-L-lysyl-[protein] + malonyl-CoA</text>
        <dbReference type="Rhea" id="RHEA:54728"/>
        <dbReference type="Rhea" id="RHEA-COMP:10505"/>
        <dbReference type="Rhea" id="RHEA-COMP:10506"/>
        <dbReference type="ChEBI" id="CHEBI:57288"/>
        <dbReference type="ChEBI" id="CHEBI:57384"/>
        <dbReference type="ChEBI" id="CHEBI:83144"/>
        <dbReference type="ChEBI" id="CHEBI:83145"/>
        <dbReference type="EC" id="2.1.3.15"/>
    </reaction>
</comment>
<comment type="pathway">
    <text evidence="1">Lipid metabolism; malonyl-CoA biosynthesis; malonyl-CoA from acetyl-CoA: step 1/1.</text>
</comment>
<comment type="subunit">
    <text evidence="1">Acetyl-CoA carboxylase is a heterohexamer composed of biotin carboxyl carrier protein (AccB), biotin carboxylase (AccC) and two subunits each of ACCase subunit alpha (AccA) and ACCase subunit beta (AccD).</text>
</comment>
<comment type="subcellular location">
    <subcellularLocation>
        <location evidence="1">Cytoplasm</location>
    </subcellularLocation>
</comment>
<comment type="similarity">
    <text evidence="1">Belongs to the AccA family.</text>
</comment>